<protein>
    <recommendedName>
        <fullName evidence="1">UPF0761 membrane protein Cpha266_1653</fullName>
    </recommendedName>
</protein>
<name>Y1653_CHLPD</name>
<comment type="subcellular location">
    <subcellularLocation>
        <location evidence="1">Cell inner membrane</location>
        <topology evidence="1">Multi-pass membrane protein</topology>
    </subcellularLocation>
</comment>
<comment type="similarity">
    <text evidence="1">Belongs to the UPF0761 family.</text>
</comment>
<feature type="chain" id="PRO_0000391029" description="UPF0761 membrane protein Cpha266_1653">
    <location>
        <begin position="1"/>
        <end position="449"/>
    </location>
</feature>
<feature type="transmembrane region" description="Helical" evidence="1">
    <location>
        <begin position="77"/>
        <end position="97"/>
    </location>
</feature>
<feature type="transmembrane region" description="Helical" evidence="1">
    <location>
        <begin position="133"/>
        <end position="153"/>
    </location>
</feature>
<feature type="transmembrane region" description="Helical" evidence="1">
    <location>
        <begin position="173"/>
        <end position="193"/>
    </location>
</feature>
<feature type="transmembrane region" description="Helical" evidence="1">
    <location>
        <begin position="214"/>
        <end position="234"/>
    </location>
</feature>
<feature type="transmembrane region" description="Helical" evidence="1">
    <location>
        <begin position="244"/>
        <end position="264"/>
    </location>
</feature>
<feature type="transmembrane region" description="Helical" evidence="1">
    <location>
        <begin position="277"/>
        <end position="297"/>
    </location>
</feature>
<accession>A1BGZ7</accession>
<reference key="1">
    <citation type="submission" date="2006-12" db="EMBL/GenBank/DDBJ databases">
        <title>Complete sequence of Chlorobium phaeobacteroides DSM 266.</title>
        <authorList>
            <consortium name="US DOE Joint Genome Institute"/>
            <person name="Copeland A."/>
            <person name="Lucas S."/>
            <person name="Lapidus A."/>
            <person name="Barry K."/>
            <person name="Detter J.C."/>
            <person name="Glavina del Rio T."/>
            <person name="Hammon N."/>
            <person name="Israni S."/>
            <person name="Pitluck S."/>
            <person name="Goltsman E."/>
            <person name="Schmutz J."/>
            <person name="Larimer F."/>
            <person name="Land M."/>
            <person name="Hauser L."/>
            <person name="Mikhailova N."/>
            <person name="Li T."/>
            <person name="Overmann J."/>
            <person name="Bryant D.A."/>
            <person name="Richardson P."/>
        </authorList>
    </citation>
    <scope>NUCLEOTIDE SEQUENCE [LARGE SCALE GENOMIC DNA]</scope>
    <source>
        <strain>DSM 266 / SMG 266 / 2430</strain>
    </source>
</reference>
<gene>
    <name type="ordered locus">Cpha266_1653</name>
</gene>
<evidence type="ECO:0000255" key="1">
    <source>
        <dbReference type="HAMAP-Rule" id="MF_00672"/>
    </source>
</evidence>
<keyword id="KW-0997">Cell inner membrane</keyword>
<keyword id="KW-1003">Cell membrane</keyword>
<keyword id="KW-0472">Membrane</keyword>
<keyword id="KW-1185">Reference proteome</keyword>
<keyword id="KW-0812">Transmembrane</keyword>
<keyword id="KW-1133">Transmembrane helix</keyword>
<proteinExistence type="inferred from homology"/>
<organism>
    <name type="scientific">Chlorobium phaeobacteroides (strain DSM 266 / SMG 266 / 2430)</name>
    <dbReference type="NCBI Taxonomy" id="290317"/>
    <lineage>
        <taxon>Bacteria</taxon>
        <taxon>Pseudomonadati</taxon>
        <taxon>Chlorobiota</taxon>
        <taxon>Chlorobiia</taxon>
        <taxon>Chlorobiales</taxon>
        <taxon>Chlorobiaceae</taxon>
        <taxon>Chlorobium/Pelodictyon group</taxon>
        <taxon>Chlorobium</taxon>
    </lineage>
</organism>
<sequence>MFEGIGGETLWRKEKQRPVKELIDFHMDWLHKKNEHDEWLSDRDGELYIRVFFPFFWKNFIHDKIFLSAGSLAFQSLLSLVPLLSVTLSILRVFPVFESLNRYLEDYVLQNFIPGTGTMLREYLNAFIDKTSSVPLLGVVFLFIIALSLISTIDHTLNEIWEVYAPRKIVQGFTLYWTVLTLGPVLIGSSLVASSFVWYTVFTEGPLLELKTRLLSFLPFLNSVIAFFLLYMLVPNRRVRFYHAVYGSLLAAVLFELSKKWFVFYVSHFATFEYIYGALSVIPMLFFWIYLEWVVVLTGAEFVFCLGSLKPKKSISEPFDPMRGIDEILVVLGWIWEGQKTGTPLSMKSIMKKKRALQPSRARSIVDLLLQAGIVHGTANAGFAVSSDLYETTLFDLYTKIPGGFGANESETRGNGGAILPESIGHNVTAGIKSAMTIPLATVLQDKIY</sequence>
<dbReference type="EMBL" id="CP000492">
    <property type="protein sequence ID" value="ABL65674.1"/>
    <property type="molecule type" value="Genomic_DNA"/>
</dbReference>
<dbReference type="RefSeq" id="WP_011745484.1">
    <property type="nucleotide sequence ID" value="NC_008639.1"/>
</dbReference>
<dbReference type="SMR" id="A1BGZ7"/>
<dbReference type="STRING" id="290317.Cpha266_1653"/>
<dbReference type="KEGG" id="cph:Cpha266_1653"/>
<dbReference type="eggNOG" id="COG1295">
    <property type="taxonomic scope" value="Bacteria"/>
</dbReference>
<dbReference type="HOGENOM" id="CLU_032288_1_0_10"/>
<dbReference type="OrthoDB" id="9808671at2"/>
<dbReference type="Proteomes" id="UP000008701">
    <property type="component" value="Chromosome"/>
</dbReference>
<dbReference type="GO" id="GO:0005886">
    <property type="term" value="C:plasma membrane"/>
    <property type="evidence" value="ECO:0007669"/>
    <property type="project" value="UniProtKB-SubCell"/>
</dbReference>
<dbReference type="HAMAP" id="MF_00672">
    <property type="entry name" value="UPF0761"/>
    <property type="match status" value="1"/>
</dbReference>
<dbReference type="InterPro" id="IPR023679">
    <property type="entry name" value="UPF0761_bac"/>
</dbReference>
<dbReference type="InterPro" id="IPR017039">
    <property type="entry name" value="Virul_fac_BrkB"/>
</dbReference>
<dbReference type="NCBIfam" id="TIGR00765">
    <property type="entry name" value="yihY_not_rbn"/>
    <property type="match status" value="1"/>
</dbReference>
<dbReference type="PANTHER" id="PTHR30213">
    <property type="entry name" value="INNER MEMBRANE PROTEIN YHJD"/>
    <property type="match status" value="1"/>
</dbReference>
<dbReference type="PANTHER" id="PTHR30213:SF0">
    <property type="entry name" value="UPF0761 MEMBRANE PROTEIN YIHY"/>
    <property type="match status" value="1"/>
</dbReference>
<dbReference type="Pfam" id="PF03631">
    <property type="entry name" value="Virul_fac_BrkB"/>
    <property type="match status" value="1"/>
</dbReference>